<protein>
    <recommendedName>
        <fullName>Uncharacterized protein aq_1241</fullName>
    </recommendedName>
</protein>
<keyword id="KW-1185">Reference proteome</keyword>
<name>Y1241_AQUAE</name>
<proteinExistence type="predicted"/>
<accession>O67286</accession>
<organism>
    <name type="scientific">Aquifex aeolicus (strain VF5)</name>
    <dbReference type="NCBI Taxonomy" id="224324"/>
    <lineage>
        <taxon>Bacteria</taxon>
        <taxon>Pseudomonadati</taxon>
        <taxon>Aquificota</taxon>
        <taxon>Aquificia</taxon>
        <taxon>Aquificales</taxon>
        <taxon>Aquificaceae</taxon>
        <taxon>Aquifex</taxon>
    </lineage>
</organism>
<gene>
    <name type="ordered locus">aq_1241</name>
</gene>
<reference key="1">
    <citation type="journal article" date="1998" name="Nature">
        <title>The complete genome of the hyperthermophilic bacterium Aquifex aeolicus.</title>
        <authorList>
            <person name="Deckert G."/>
            <person name="Warren P.V."/>
            <person name="Gaasterland T."/>
            <person name="Young W.G."/>
            <person name="Lenox A.L."/>
            <person name="Graham D.E."/>
            <person name="Overbeek R."/>
            <person name="Snead M.A."/>
            <person name="Keller M."/>
            <person name="Aujay M."/>
            <person name="Huber R."/>
            <person name="Feldman R.A."/>
            <person name="Short J.M."/>
            <person name="Olsen G.J."/>
            <person name="Swanson R.V."/>
        </authorList>
    </citation>
    <scope>NUCLEOTIDE SEQUENCE [LARGE SCALE GENOMIC DNA]</scope>
    <source>
        <strain>VF5</strain>
    </source>
</reference>
<dbReference type="EMBL" id="AE000657">
    <property type="protein sequence ID" value="AAC07250.1"/>
    <property type="molecule type" value="Genomic_DNA"/>
</dbReference>
<dbReference type="PIR" id="C70407">
    <property type="entry name" value="C70407"/>
</dbReference>
<dbReference type="RefSeq" id="NP_213850.1">
    <property type="nucleotide sequence ID" value="NC_000918.1"/>
</dbReference>
<dbReference type="RefSeq" id="WP_010880788.1">
    <property type="nucleotide sequence ID" value="NC_000918.1"/>
</dbReference>
<dbReference type="SMR" id="O67286"/>
<dbReference type="STRING" id="224324.aq_1241"/>
<dbReference type="EnsemblBacteria" id="AAC07250">
    <property type="protein sequence ID" value="AAC07250"/>
    <property type="gene ID" value="aq_1241"/>
</dbReference>
<dbReference type="KEGG" id="aae:aq_1241"/>
<dbReference type="eggNOG" id="ENOG502ZD54">
    <property type="taxonomic scope" value="Bacteria"/>
</dbReference>
<dbReference type="HOGENOM" id="CLU_1736759_0_0_0"/>
<dbReference type="InParanoid" id="O67286"/>
<dbReference type="OrthoDB" id="14563at2"/>
<dbReference type="Proteomes" id="UP000000798">
    <property type="component" value="Chromosome"/>
</dbReference>
<dbReference type="InterPro" id="IPR056412">
    <property type="entry name" value="Ig_CycH"/>
</dbReference>
<dbReference type="Pfam" id="PF23892">
    <property type="entry name" value="Ig_CycH"/>
    <property type="match status" value="1"/>
</dbReference>
<dbReference type="PROSITE" id="PS51257">
    <property type="entry name" value="PROKAR_LIPOPROTEIN"/>
    <property type="match status" value="1"/>
</dbReference>
<sequence length="150" mass="17350">MKWIFLLLSLLIYSCQELPKKYQTPEGKKILEKYKKQYVKGVVILDDKLKEKIPKGERYLIIAVMKEGSSRPVAVLRVKNPDFPYRFKITGKHKIVPEDFIEGKLMLTARISKEPTAGFKRGDLYGFAQAQAGDEDVKILINQVFEEKEK</sequence>
<feature type="chain" id="PRO_0000186913" description="Uncharacterized protein aq_1241">
    <location>
        <begin position="1"/>
        <end position="150"/>
    </location>
</feature>